<evidence type="ECO:0000250" key="1"/>
<evidence type="ECO:0000250" key="2">
    <source>
        <dbReference type="UniProtKB" id="P08815"/>
    </source>
</evidence>
<evidence type="ECO:0000269" key="3">
    <source>
    </source>
</evidence>
<evidence type="ECO:0000303" key="4">
    <source>
    </source>
</evidence>
<evidence type="ECO:0000305" key="5"/>
<evidence type="ECO:0000305" key="6">
    <source>
    </source>
</evidence>
<keyword id="KW-0027">Amidation</keyword>
<keyword id="KW-0903">Direct protein sequencing</keyword>
<keyword id="KW-1015">Disulfide bond</keyword>
<keyword id="KW-0872">Ion channel impairing toxin</keyword>
<keyword id="KW-0528">Neurotoxin</keyword>
<keyword id="KW-0632">Potassium channel impairing toxin</keyword>
<keyword id="KW-0964">Secreted</keyword>
<keyword id="KW-0800">Toxin</keyword>
<keyword id="KW-1220">Voltage-gated potassium channel impairing toxin</keyword>
<comment type="function">
    <text evidence="3">Blocks Kv1.3/KCNA3 voltage-gated potassium channels of human T-lymphocytes (Kd=0.25 nM).</text>
</comment>
<comment type="subcellular location">
    <subcellularLocation>
        <location evidence="3">Secreted</location>
    </subcellularLocation>
</comment>
<comment type="tissue specificity">
    <text evidence="6">Expressed by the venom gland.</text>
</comment>
<comment type="domain">
    <text evidence="2">Has the structural arrangement of an alpha-helix connected to a beta-sheet by disulfide bonds (CSalpha/beta).</text>
</comment>
<comment type="mass spectrometry" mass="4267.0" method="Electrospray" evidence="3"/>
<comment type="miscellaneous">
    <text evidence="3">Negative results: does not inhibit calcium-activated potassium channels (KCa3.1/KCNN4) of human T-lymphocytes. Does not inhibit voltage-gated Shaker potassium channels. Does not inhibit Kv2.1/KCNB1 potassium channels.</text>
</comment>
<comment type="similarity">
    <text evidence="5">Belongs to the short scorpion toxin superfamily. Potassium channel inhibitor family. Alpha-KTx 02 subfamily.</text>
</comment>
<protein>
    <recommendedName>
        <fullName>Potassium channel toxin alpha-KTx 2.9</fullName>
    </recommendedName>
    <alternativeName>
        <fullName evidence="4">Toxin Ce2</fullName>
    </alternativeName>
</protein>
<reference key="1">
    <citation type="journal article" date="2005" name="Toxicon">
        <title>Novel alpha-KTx peptides from the venom of the scorpion Centruroides elegans selectively blockade Kv1.3 over IKCa1 K+ channels of T cells.</title>
        <authorList>
            <person name="Olamendi-Portugal T."/>
            <person name="Somodi S."/>
            <person name="Fernandez J.A."/>
            <person name="Zamudio F.Z."/>
            <person name="Becerril B."/>
            <person name="Varga Z."/>
            <person name="Panyi G."/>
            <person name="Gaspar R."/>
            <person name="Possani L.D."/>
        </authorList>
    </citation>
    <scope>PROTEIN SEQUENCE</scope>
    <scope>FUNCTION</scope>
    <scope>MASS SPECTROMETRY</scope>
    <scope>SUBCELLULAR LOCATION</scope>
    <scope>AMIDATION AT ASN-39</scope>
    <scope>ACTIVITY PROFILE</scope>
    <source>
        <tissue>Venom</tissue>
    </source>
</reference>
<name>KAX29_CENEL</name>
<sequence length="39" mass="4274">TIINVKCTSPKQCLKPCKDLYGPHAGAKCMNGKCKCYNN</sequence>
<proteinExistence type="evidence at protein level"/>
<feature type="chain" id="PRO_0000226959" description="Potassium channel toxin alpha-KTx 2.9" evidence="3">
    <location>
        <begin position="1"/>
        <end position="39"/>
    </location>
</feature>
<feature type="site" description="Basic residue of the functional dyad" evidence="1">
    <location>
        <position position="28"/>
    </location>
</feature>
<feature type="site" description="Aromatic residue of the functional dyad" evidence="1">
    <location>
        <position position="37"/>
    </location>
</feature>
<feature type="modified residue" description="Asparagine amide" evidence="3">
    <location>
        <position position="39"/>
    </location>
</feature>
<feature type="disulfide bond" evidence="2">
    <location>
        <begin position="7"/>
        <end position="29"/>
    </location>
</feature>
<feature type="disulfide bond" evidence="2">
    <location>
        <begin position="13"/>
        <end position="34"/>
    </location>
</feature>
<feature type="disulfide bond" evidence="2">
    <location>
        <begin position="17"/>
        <end position="36"/>
    </location>
</feature>
<accession>P0C162</accession>
<dbReference type="SMR" id="P0C162"/>
<dbReference type="GO" id="GO:0005576">
    <property type="term" value="C:extracellular region"/>
    <property type="evidence" value="ECO:0007669"/>
    <property type="project" value="UniProtKB-SubCell"/>
</dbReference>
<dbReference type="GO" id="GO:0008200">
    <property type="term" value="F:ion channel inhibitor activity"/>
    <property type="evidence" value="ECO:0007669"/>
    <property type="project" value="InterPro"/>
</dbReference>
<dbReference type="GO" id="GO:0015459">
    <property type="term" value="F:potassium channel regulator activity"/>
    <property type="evidence" value="ECO:0007669"/>
    <property type="project" value="UniProtKB-KW"/>
</dbReference>
<dbReference type="GO" id="GO:0090729">
    <property type="term" value="F:toxin activity"/>
    <property type="evidence" value="ECO:0007669"/>
    <property type="project" value="UniProtKB-KW"/>
</dbReference>
<dbReference type="FunFam" id="3.30.30.10:FF:000009">
    <property type="entry name" value="Potassium channel toxin alpha-KTx 4.3"/>
    <property type="match status" value="1"/>
</dbReference>
<dbReference type="Gene3D" id="3.30.30.10">
    <property type="entry name" value="Knottin, scorpion toxin-like"/>
    <property type="match status" value="1"/>
</dbReference>
<dbReference type="InterPro" id="IPR036574">
    <property type="entry name" value="Scorpion_toxin-like_sf"/>
</dbReference>
<dbReference type="InterPro" id="IPR001947">
    <property type="entry name" value="Scorpion_toxinS_K_inh"/>
</dbReference>
<dbReference type="Pfam" id="PF00451">
    <property type="entry name" value="Toxin_2"/>
    <property type="match status" value="1"/>
</dbReference>
<dbReference type="PRINTS" id="PR00286">
    <property type="entry name" value="CHARYBDTOXIN"/>
</dbReference>
<dbReference type="SUPFAM" id="SSF57095">
    <property type="entry name" value="Scorpion toxin-like"/>
    <property type="match status" value="1"/>
</dbReference>
<dbReference type="PROSITE" id="PS01138">
    <property type="entry name" value="SCORP_SHORT_TOXIN"/>
    <property type="match status" value="1"/>
</dbReference>
<organism>
    <name type="scientific">Centruroides elegans</name>
    <name type="common">Bark scorpion</name>
    <dbReference type="NCBI Taxonomy" id="217897"/>
    <lineage>
        <taxon>Eukaryota</taxon>
        <taxon>Metazoa</taxon>
        <taxon>Ecdysozoa</taxon>
        <taxon>Arthropoda</taxon>
        <taxon>Chelicerata</taxon>
        <taxon>Arachnida</taxon>
        <taxon>Scorpiones</taxon>
        <taxon>Buthida</taxon>
        <taxon>Buthoidea</taxon>
        <taxon>Buthidae</taxon>
        <taxon>Centruroides</taxon>
    </lineage>
</organism>